<comment type="function">
    <text evidence="1">Involved in the biosynthesis of ADP-glucose, a building block required for the elongation reactions to produce glycogen. Catalyzes the reaction between ATP and alpha-D-glucose 1-phosphate (G1P) to produce pyrophosphate and ADP-Glc.</text>
</comment>
<comment type="catalytic activity">
    <reaction evidence="1">
        <text>alpha-D-glucose 1-phosphate + ATP + H(+) = ADP-alpha-D-glucose + diphosphate</text>
        <dbReference type="Rhea" id="RHEA:12120"/>
        <dbReference type="ChEBI" id="CHEBI:15378"/>
        <dbReference type="ChEBI" id="CHEBI:30616"/>
        <dbReference type="ChEBI" id="CHEBI:33019"/>
        <dbReference type="ChEBI" id="CHEBI:57498"/>
        <dbReference type="ChEBI" id="CHEBI:58601"/>
        <dbReference type="EC" id="2.7.7.27"/>
    </reaction>
</comment>
<comment type="pathway">
    <text evidence="1">Glycan biosynthesis; glycogen biosynthesis.</text>
</comment>
<comment type="subunit">
    <text evidence="1">Homotetramer.</text>
</comment>
<comment type="similarity">
    <text evidence="1">Belongs to the bacterial/plant glucose-1-phosphate adenylyltransferase family.</text>
</comment>
<sequence length="408" mass="44767">MAKTRPKVLSIVLAGGEGKRLMPLTMDRAKPAVPFGGTYRLIDFVLSNLANSGLTQIAVLTQYKSHSLDRHISITWRMSTMLGSYVTPVPAQQRLGPRWYQGSADAIYQSLNLINDQSPDYVVVFGADNIYRMDVDAMLQYHIDSGLGCTVAGIRVPRKDASAFGIIDADQNHKITEFLEKPADPPGLPDASDESFASMGNYIFSREALVQALHDDAHSADSRHDMGGDVIPRFVNAADAQVYDFRDNEVPGNTEKDADYWRDVGTIDAYHDAHMDLVSVEPEFNLYNPDWPIWTMQEQAPGAKFVMRGSCDDTLVSAGCIISGTDIYRTVLGPRARIERWARVDESIVMNNVAIGSNATVHRAILDKNVIVPDGAQVGVDHDHDRARGFTVSPGGVTVVGKGITVPY</sequence>
<gene>
    <name evidence="1" type="primary">glgC</name>
    <name type="ordered locus">PPA0640</name>
</gene>
<proteinExistence type="inferred from homology"/>
<evidence type="ECO:0000255" key="1">
    <source>
        <dbReference type="HAMAP-Rule" id="MF_00624"/>
    </source>
</evidence>
<feature type="chain" id="PRO_0000195316" description="Glucose-1-phosphate adenylyltransferase">
    <location>
        <begin position="1"/>
        <end position="408"/>
    </location>
</feature>
<feature type="binding site" evidence="1">
    <location>
        <position position="100"/>
    </location>
    <ligand>
        <name>alpha-D-glucose 1-phosphate</name>
        <dbReference type="ChEBI" id="CHEBI:58601"/>
    </ligand>
</feature>
<feature type="binding site" evidence="1">
    <location>
        <position position="165"/>
    </location>
    <ligand>
        <name>alpha-D-glucose 1-phosphate</name>
        <dbReference type="ChEBI" id="CHEBI:58601"/>
    </ligand>
</feature>
<feature type="binding site" evidence="1">
    <location>
        <begin position="180"/>
        <end position="181"/>
    </location>
    <ligand>
        <name>alpha-D-glucose 1-phosphate</name>
        <dbReference type="ChEBI" id="CHEBI:58601"/>
    </ligand>
</feature>
<feature type="binding site" evidence="1">
    <location>
        <position position="198"/>
    </location>
    <ligand>
        <name>alpha-D-glucose 1-phosphate</name>
        <dbReference type="ChEBI" id="CHEBI:58601"/>
    </ligand>
</feature>
<protein>
    <recommendedName>
        <fullName evidence="1">Glucose-1-phosphate adenylyltransferase</fullName>
        <ecNumber evidence="1">2.7.7.27</ecNumber>
    </recommendedName>
    <alternativeName>
        <fullName evidence="1">ADP-glucose pyrophosphorylase</fullName>
        <shortName evidence="1">ADPGlc PPase</shortName>
    </alternativeName>
    <alternativeName>
        <fullName evidence="1">ADP-glucose synthase</fullName>
    </alternativeName>
</protein>
<keyword id="KW-0067">ATP-binding</keyword>
<keyword id="KW-0119">Carbohydrate metabolism</keyword>
<keyword id="KW-0320">Glycogen biosynthesis</keyword>
<keyword id="KW-0321">Glycogen metabolism</keyword>
<keyword id="KW-0547">Nucleotide-binding</keyword>
<keyword id="KW-0548">Nucleotidyltransferase</keyword>
<keyword id="KW-0808">Transferase</keyword>
<name>GLGC_CUTAK</name>
<reference key="1">
    <citation type="journal article" date="2004" name="Science">
        <title>The complete genome sequence of Propionibacterium acnes, a commensal of human skin.</title>
        <authorList>
            <person name="Brueggemann H."/>
            <person name="Henne A."/>
            <person name="Hoster F."/>
            <person name="Liesegang H."/>
            <person name="Wiezer A."/>
            <person name="Strittmatter A."/>
            <person name="Hujer S."/>
            <person name="Duerre P."/>
            <person name="Gottschalk G."/>
        </authorList>
    </citation>
    <scope>NUCLEOTIDE SEQUENCE [LARGE SCALE GENOMIC DNA]</scope>
    <source>
        <strain>DSM 16379 / KPA171202</strain>
    </source>
</reference>
<dbReference type="EC" id="2.7.7.27" evidence="1"/>
<dbReference type="EMBL" id="AE017283">
    <property type="protein sequence ID" value="AAT82396.1"/>
    <property type="molecule type" value="Genomic_DNA"/>
</dbReference>
<dbReference type="RefSeq" id="WP_002515129.1">
    <property type="nucleotide sequence ID" value="NZ_CP025935.1"/>
</dbReference>
<dbReference type="SMR" id="Q6AA20"/>
<dbReference type="EnsemblBacteria" id="AAT82396">
    <property type="protein sequence ID" value="AAT82396"/>
    <property type="gene ID" value="PPA0640"/>
</dbReference>
<dbReference type="GeneID" id="92856624"/>
<dbReference type="KEGG" id="pac:PPA0640"/>
<dbReference type="eggNOG" id="COG0448">
    <property type="taxonomic scope" value="Bacteria"/>
</dbReference>
<dbReference type="HOGENOM" id="CLU_029499_14_1_11"/>
<dbReference type="UniPathway" id="UPA00164"/>
<dbReference type="Proteomes" id="UP000000603">
    <property type="component" value="Chromosome"/>
</dbReference>
<dbReference type="GO" id="GO:0005524">
    <property type="term" value="F:ATP binding"/>
    <property type="evidence" value="ECO:0007669"/>
    <property type="project" value="UniProtKB-KW"/>
</dbReference>
<dbReference type="GO" id="GO:0008878">
    <property type="term" value="F:glucose-1-phosphate adenylyltransferase activity"/>
    <property type="evidence" value="ECO:0007669"/>
    <property type="project" value="UniProtKB-UniRule"/>
</dbReference>
<dbReference type="GO" id="GO:0005978">
    <property type="term" value="P:glycogen biosynthetic process"/>
    <property type="evidence" value="ECO:0007669"/>
    <property type="project" value="UniProtKB-UniRule"/>
</dbReference>
<dbReference type="CDD" id="cd02508">
    <property type="entry name" value="ADP_Glucose_PP"/>
    <property type="match status" value="1"/>
</dbReference>
<dbReference type="CDD" id="cd04651">
    <property type="entry name" value="LbH_G1P_AT_C"/>
    <property type="match status" value="1"/>
</dbReference>
<dbReference type="Gene3D" id="2.160.10.10">
    <property type="entry name" value="Hexapeptide repeat proteins"/>
    <property type="match status" value="1"/>
</dbReference>
<dbReference type="Gene3D" id="3.90.550.10">
    <property type="entry name" value="Spore Coat Polysaccharide Biosynthesis Protein SpsA, Chain A"/>
    <property type="match status" value="1"/>
</dbReference>
<dbReference type="HAMAP" id="MF_00624">
    <property type="entry name" value="GlgC"/>
    <property type="match status" value="1"/>
</dbReference>
<dbReference type="InterPro" id="IPR011831">
    <property type="entry name" value="ADP-Glc_PPase"/>
</dbReference>
<dbReference type="InterPro" id="IPR005836">
    <property type="entry name" value="ADP_Glu_pyroP_CS"/>
</dbReference>
<dbReference type="InterPro" id="IPR023049">
    <property type="entry name" value="GlgC_bac"/>
</dbReference>
<dbReference type="InterPro" id="IPR056818">
    <property type="entry name" value="GlmU/GlgC-like_hexapep"/>
</dbReference>
<dbReference type="InterPro" id="IPR005835">
    <property type="entry name" value="NTP_transferase_dom"/>
</dbReference>
<dbReference type="InterPro" id="IPR029044">
    <property type="entry name" value="Nucleotide-diphossugar_trans"/>
</dbReference>
<dbReference type="InterPro" id="IPR011004">
    <property type="entry name" value="Trimer_LpxA-like_sf"/>
</dbReference>
<dbReference type="NCBIfam" id="TIGR02091">
    <property type="entry name" value="glgC"/>
    <property type="match status" value="1"/>
</dbReference>
<dbReference type="NCBIfam" id="NF001947">
    <property type="entry name" value="PRK00725.1"/>
    <property type="match status" value="1"/>
</dbReference>
<dbReference type="NCBIfam" id="NF002023">
    <property type="entry name" value="PRK00844.1"/>
    <property type="match status" value="1"/>
</dbReference>
<dbReference type="PANTHER" id="PTHR43523:SF2">
    <property type="entry name" value="GLUCOSE-1-PHOSPHATE ADENYLYLTRANSFERASE"/>
    <property type="match status" value="1"/>
</dbReference>
<dbReference type="PANTHER" id="PTHR43523">
    <property type="entry name" value="GLUCOSE-1-PHOSPHATE ADENYLYLTRANSFERASE-RELATED"/>
    <property type="match status" value="1"/>
</dbReference>
<dbReference type="Pfam" id="PF24894">
    <property type="entry name" value="Hexapep_GlmU"/>
    <property type="match status" value="1"/>
</dbReference>
<dbReference type="Pfam" id="PF00483">
    <property type="entry name" value="NTP_transferase"/>
    <property type="match status" value="1"/>
</dbReference>
<dbReference type="SUPFAM" id="SSF53448">
    <property type="entry name" value="Nucleotide-diphospho-sugar transferases"/>
    <property type="match status" value="1"/>
</dbReference>
<dbReference type="SUPFAM" id="SSF51161">
    <property type="entry name" value="Trimeric LpxA-like enzymes"/>
    <property type="match status" value="1"/>
</dbReference>
<dbReference type="PROSITE" id="PS00808">
    <property type="entry name" value="ADP_GLC_PYROPHOSPH_1"/>
    <property type="match status" value="1"/>
</dbReference>
<dbReference type="PROSITE" id="PS00809">
    <property type="entry name" value="ADP_GLC_PYROPHOSPH_2"/>
    <property type="match status" value="1"/>
</dbReference>
<dbReference type="PROSITE" id="PS00810">
    <property type="entry name" value="ADP_GLC_PYROPHOSPH_3"/>
    <property type="match status" value="1"/>
</dbReference>
<organism>
    <name type="scientific">Cutibacterium acnes (strain DSM 16379 / KPA171202)</name>
    <name type="common">Propionibacterium acnes</name>
    <dbReference type="NCBI Taxonomy" id="267747"/>
    <lineage>
        <taxon>Bacteria</taxon>
        <taxon>Bacillati</taxon>
        <taxon>Actinomycetota</taxon>
        <taxon>Actinomycetes</taxon>
        <taxon>Propionibacteriales</taxon>
        <taxon>Propionibacteriaceae</taxon>
        <taxon>Cutibacterium</taxon>
    </lineage>
</organism>
<accession>Q6AA20</accession>